<gene>
    <name evidence="1" type="primary">kduI</name>
    <name type="ordered locus">ECDH10B_3015</name>
</gene>
<proteinExistence type="inferred from homology"/>
<protein>
    <recommendedName>
        <fullName evidence="1">4-deoxy-L-threo-5-hexosulose-uronate ketol-isomerase</fullName>
        <ecNumber evidence="1">5.3.1.17</ecNumber>
    </recommendedName>
    <alternativeName>
        <fullName evidence="1">5-keto-4-deoxyuronate isomerase</fullName>
    </alternativeName>
    <alternativeName>
        <fullName evidence="1">DKI isomerase</fullName>
    </alternativeName>
</protein>
<sequence>MDVRQSIHSAHAKTLDTQGLRNEFLVEKVFVADEYTMVYSHIDRIIVGGIMPITKTVSVGGEVGKQLGVSYFLERRELGVINIGGAGTITVDGQCYEIGHRDALYVGKGAKEVVFASIDTGTPAKFYYNCAPAHTTYPTKKVTPDEVSPVTLGDNLTSNRRTINKYFVPDVLETCQLSMGLTELAPGNLWNTMPCHTHERRMEVYFYFNMDDDACVFHMMGQPQETRHIVMHNEQAVISPSWSIHSGVGTKAYTFIWGMVGENQVFDDMDHVAVKDLR</sequence>
<evidence type="ECO:0000255" key="1">
    <source>
        <dbReference type="HAMAP-Rule" id="MF_00687"/>
    </source>
</evidence>
<accession>B1XED7</accession>
<feature type="chain" id="PRO_1000131882" description="4-deoxy-L-threo-5-hexosulose-uronate ketol-isomerase">
    <location>
        <begin position="1"/>
        <end position="278"/>
    </location>
</feature>
<feature type="binding site" evidence="1">
    <location>
        <position position="196"/>
    </location>
    <ligand>
        <name>Zn(2+)</name>
        <dbReference type="ChEBI" id="CHEBI:29105"/>
    </ligand>
</feature>
<feature type="binding site" evidence="1">
    <location>
        <position position="198"/>
    </location>
    <ligand>
        <name>Zn(2+)</name>
        <dbReference type="ChEBI" id="CHEBI:29105"/>
    </ligand>
</feature>
<feature type="binding site" evidence="1">
    <location>
        <position position="203"/>
    </location>
    <ligand>
        <name>Zn(2+)</name>
        <dbReference type="ChEBI" id="CHEBI:29105"/>
    </ligand>
</feature>
<feature type="binding site" evidence="1">
    <location>
        <position position="245"/>
    </location>
    <ligand>
        <name>Zn(2+)</name>
        <dbReference type="ChEBI" id="CHEBI:29105"/>
    </ligand>
</feature>
<organism>
    <name type="scientific">Escherichia coli (strain K12 / DH10B)</name>
    <dbReference type="NCBI Taxonomy" id="316385"/>
    <lineage>
        <taxon>Bacteria</taxon>
        <taxon>Pseudomonadati</taxon>
        <taxon>Pseudomonadota</taxon>
        <taxon>Gammaproteobacteria</taxon>
        <taxon>Enterobacterales</taxon>
        <taxon>Enterobacteriaceae</taxon>
        <taxon>Escherichia</taxon>
    </lineage>
</organism>
<name>KDUI_ECODH</name>
<comment type="function">
    <text evidence="1">Catalyzes the isomerization of 5-dehydro-4-deoxy-D-glucuronate to 3-deoxy-D-glycero-2,5-hexodiulosonate.</text>
</comment>
<comment type="catalytic activity">
    <reaction evidence="1">
        <text>5-dehydro-4-deoxy-D-glucuronate = 3-deoxy-D-glycero-2,5-hexodiulosonate</text>
        <dbReference type="Rhea" id="RHEA:23896"/>
        <dbReference type="ChEBI" id="CHEBI:17117"/>
        <dbReference type="ChEBI" id="CHEBI:29071"/>
        <dbReference type="EC" id="5.3.1.17"/>
    </reaction>
</comment>
<comment type="cofactor">
    <cofactor evidence="1">
        <name>Zn(2+)</name>
        <dbReference type="ChEBI" id="CHEBI:29105"/>
    </cofactor>
    <text evidence="1">Binds 1 zinc ion per subunit.</text>
</comment>
<comment type="pathway">
    <text evidence="1">Glycan metabolism; pectin degradation; 2-dehydro-3-deoxy-D-gluconate from pectin: step 4/5.</text>
</comment>
<comment type="subunit">
    <text evidence="1">Homohexamer.</text>
</comment>
<comment type="similarity">
    <text evidence="1">Belongs to the KduI family.</text>
</comment>
<keyword id="KW-0413">Isomerase</keyword>
<keyword id="KW-0479">Metal-binding</keyword>
<keyword id="KW-0862">Zinc</keyword>
<reference key="1">
    <citation type="journal article" date="2008" name="J. Bacteriol.">
        <title>The complete genome sequence of Escherichia coli DH10B: insights into the biology of a laboratory workhorse.</title>
        <authorList>
            <person name="Durfee T."/>
            <person name="Nelson R."/>
            <person name="Baldwin S."/>
            <person name="Plunkett G. III"/>
            <person name="Burland V."/>
            <person name="Mau B."/>
            <person name="Petrosino J.F."/>
            <person name="Qin X."/>
            <person name="Muzny D.M."/>
            <person name="Ayele M."/>
            <person name="Gibbs R.A."/>
            <person name="Csorgo B."/>
            <person name="Posfai G."/>
            <person name="Weinstock G.M."/>
            <person name="Blattner F.R."/>
        </authorList>
    </citation>
    <scope>NUCLEOTIDE SEQUENCE [LARGE SCALE GENOMIC DNA]</scope>
    <source>
        <strain>K12 / DH10B</strain>
    </source>
</reference>
<dbReference type="EC" id="5.3.1.17" evidence="1"/>
<dbReference type="EMBL" id="CP000948">
    <property type="protein sequence ID" value="ACB03953.1"/>
    <property type="molecule type" value="Genomic_DNA"/>
</dbReference>
<dbReference type="RefSeq" id="WP_000383237.1">
    <property type="nucleotide sequence ID" value="NC_010473.1"/>
</dbReference>
<dbReference type="SMR" id="B1XED7"/>
<dbReference type="GeneID" id="75203765"/>
<dbReference type="KEGG" id="ecd:ECDH10B_3015"/>
<dbReference type="HOGENOM" id="CLU_062609_0_0_6"/>
<dbReference type="UniPathway" id="UPA00545">
    <property type="reaction ID" value="UER00826"/>
</dbReference>
<dbReference type="GO" id="GO:0008697">
    <property type="term" value="F:4-deoxy-L-threo-5-hexosulose-uronate ketol-isomerase activity"/>
    <property type="evidence" value="ECO:0007669"/>
    <property type="project" value="UniProtKB-UniRule"/>
</dbReference>
<dbReference type="GO" id="GO:0008270">
    <property type="term" value="F:zinc ion binding"/>
    <property type="evidence" value="ECO:0007669"/>
    <property type="project" value="UniProtKB-UniRule"/>
</dbReference>
<dbReference type="GO" id="GO:0019698">
    <property type="term" value="P:D-galacturonate catabolic process"/>
    <property type="evidence" value="ECO:0007669"/>
    <property type="project" value="TreeGrafter"/>
</dbReference>
<dbReference type="GO" id="GO:0042840">
    <property type="term" value="P:D-glucuronate catabolic process"/>
    <property type="evidence" value="ECO:0007669"/>
    <property type="project" value="TreeGrafter"/>
</dbReference>
<dbReference type="GO" id="GO:0045490">
    <property type="term" value="P:pectin catabolic process"/>
    <property type="evidence" value="ECO:0007669"/>
    <property type="project" value="UniProtKB-UniRule"/>
</dbReference>
<dbReference type="CDD" id="cd20491">
    <property type="entry name" value="cupin_KduI_C"/>
    <property type="match status" value="1"/>
</dbReference>
<dbReference type="CDD" id="cd20294">
    <property type="entry name" value="cupin_KduI_N"/>
    <property type="match status" value="1"/>
</dbReference>
<dbReference type="FunFam" id="2.60.120.10:FF:000018">
    <property type="entry name" value="4-deoxy-L-threo-5-hexosulose-uronate ketol-isomerase"/>
    <property type="match status" value="1"/>
</dbReference>
<dbReference type="FunFam" id="2.60.120.520:FF:000001">
    <property type="entry name" value="4-deoxy-L-threo-5-hexosulose-uronate ketol-isomerase"/>
    <property type="match status" value="1"/>
</dbReference>
<dbReference type="Gene3D" id="2.60.120.10">
    <property type="entry name" value="Jelly Rolls"/>
    <property type="match status" value="1"/>
</dbReference>
<dbReference type="Gene3D" id="2.60.120.520">
    <property type="entry name" value="pectin degrading enzyme 5-keto 4- deoxyuronate isomerase, domain 1"/>
    <property type="match status" value="1"/>
</dbReference>
<dbReference type="HAMAP" id="MF_00687">
    <property type="entry name" value="KduI"/>
    <property type="match status" value="1"/>
</dbReference>
<dbReference type="InterPro" id="IPR007045">
    <property type="entry name" value="KduI"/>
</dbReference>
<dbReference type="InterPro" id="IPR021120">
    <property type="entry name" value="KduI/IolB_isomerase"/>
</dbReference>
<dbReference type="InterPro" id="IPR027449">
    <property type="entry name" value="KduI_N"/>
</dbReference>
<dbReference type="InterPro" id="IPR014710">
    <property type="entry name" value="RmlC-like_jellyroll"/>
</dbReference>
<dbReference type="InterPro" id="IPR011051">
    <property type="entry name" value="RmlC_Cupin_sf"/>
</dbReference>
<dbReference type="NCBIfam" id="NF002091">
    <property type="entry name" value="PRK00924.1"/>
    <property type="match status" value="1"/>
</dbReference>
<dbReference type="PANTHER" id="PTHR38461">
    <property type="entry name" value="4-DEOXY-L-THREO-5-HEXOSULOSE-URONATE KETOL-ISOMERASE"/>
    <property type="match status" value="1"/>
</dbReference>
<dbReference type="PANTHER" id="PTHR38461:SF1">
    <property type="entry name" value="4-DEOXY-L-THREO-5-HEXOSULOSE-URONATE KETOL-ISOMERASE"/>
    <property type="match status" value="1"/>
</dbReference>
<dbReference type="Pfam" id="PF04962">
    <property type="entry name" value="KduI"/>
    <property type="match status" value="1"/>
</dbReference>
<dbReference type="PIRSF" id="PIRSF006625">
    <property type="entry name" value="KduI"/>
    <property type="match status" value="1"/>
</dbReference>
<dbReference type="SUPFAM" id="SSF51182">
    <property type="entry name" value="RmlC-like cupins"/>
    <property type="match status" value="1"/>
</dbReference>